<organism>
    <name type="scientific">Escherichia coli O111:H-</name>
    <dbReference type="NCBI Taxonomy" id="168927"/>
    <lineage>
        <taxon>Bacteria</taxon>
        <taxon>Pseudomonadati</taxon>
        <taxon>Pseudomonadota</taxon>
        <taxon>Gammaproteobacteria</taxon>
        <taxon>Enterobacterales</taxon>
        <taxon>Enterobacteriaceae</taxon>
        <taxon>Escherichia</taxon>
    </lineage>
</organism>
<reference key="1">
    <citation type="journal article" date="1993" name="Mol. Microbiol.">
        <title>Repeat unit polysaccharides of bacteria: a model for polymerization resembling that of ribosomes and fatty acid synthetase, with a novel mechanism for determining chain length.</title>
        <authorList>
            <person name="Bastin D.A."/>
            <person name="Stevenson G."/>
            <person name="Brown P.K."/>
            <person name="Haase A."/>
            <person name="Reeves P.R."/>
        </authorList>
    </citation>
    <scope>NUCLEOTIDE SEQUENCE [GENOMIC DNA]</scope>
    <source>
        <strain>O111:H- / M92 / EPEC</strain>
    </source>
</reference>
<comment type="similarity">
    <text evidence="2">Belongs to the NAD(P)-dependent epimerase/dehydratase family. dTDP-glucose dehydratase subfamily.</text>
</comment>
<accession>Q04871</accession>
<sequence>MKYLVTGAAGFIGFHVSKRLLEAGHQVVGIDNLNDYYDVSLKQARLELLAQPGFQFHKIDLADREGMTDLFASGHFERVFISPHRLAVRYSLENPHAYADSNLTGFLNILEGCRHNKIQHLLYASSSSVYGLNRKMPFSTDDSVDHPVSLYAATKKANELMAHTYSHLYGLPATGLRFFTVYGPWGRPDMALFKFTKAMLEGKSIDVYNYGKMKRDFTYIDDIAEAIIRLQDVIPHADTQWTVETGTPAASIAPYRVYNIGNSSPVELMDYIQALEDALGIEAKKNMLPLQPGDVLETSADTKALYEVIGFTPETTVKDGVKNFVNWYRDFYKV</sequence>
<dbReference type="EMBL" id="Z17241">
    <property type="protein sequence ID" value="CAA78940.1"/>
    <property type="molecule type" value="Genomic_DNA"/>
</dbReference>
<dbReference type="PIR" id="S33669">
    <property type="entry name" value="S33669"/>
</dbReference>
<dbReference type="SMR" id="Q04871"/>
<dbReference type="GO" id="GO:0016829">
    <property type="term" value="F:lyase activity"/>
    <property type="evidence" value="ECO:0007669"/>
    <property type="project" value="UniProtKB-KW"/>
</dbReference>
<dbReference type="CDD" id="cd05253">
    <property type="entry name" value="UDP_GE_SDE_e"/>
    <property type="match status" value="1"/>
</dbReference>
<dbReference type="Gene3D" id="3.40.50.720">
    <property type="entry name" value="NAD(P)-binding Rossmann-like Domain"/>
    <property type="match status" value="1"/>
</dbReference>
<dbReference type="InterPro" id="IPR001509">
    <property type="entry name" value="Epimerase_deHydtase"/>
</dbReference>
<dbReference type="InterPro" id="IPR036291">
    <property type="entry name" value="NAD(P)-bd_dom_sf"/>
</dbReference>
<dbReference type="PANTHER" id="PTHR43574">
    <property type="entry name" value="EPIMERASE-RELATED"/>
    <property type="match status" value="1"/>
</dbReference>
<dbReference type="Pfam" id="PF01370">
    <property type="entry name" value="Epimerase"/>
    <property type="match status" value="1"/>
</dbReference>
<dbReference type="PRINTS" id="PR01713">
    <property type="entry name" value="NUCEPIMERASE"/>
</dbReference>
<dbReference type="SUPFAM" id="SSF51735">
    <property type="entry name" value="NAD(P)-binding Rossmann-fold domains"/>
    <property type="match status" value="1"/>
</dbReference>
<proteinExistence type="inferred from homology"/>
<evidence type="ECO:0000250" key="1"/>
<evidence type="ECO:0000305" key="2"/>
<keyword id="KW-0456">Lyase</keyword>
<keyword id="KW-0520">NAD</keyword>
<protein>
    <recommendedName>
        <fullName>Uncharacterized 37.6 kDa protein in cld 5'region</fullName>
    </recommendedName>
    <alternativeName>
        <fullName>ORF2</fullName>
    </alternativeName>
</protein>
<feature type="chain" id="PRO_0000183263" description="Uncharacterized 37.6 kDa protein in cld 5'region">
    <location>
        <begin position="1"/>
        <end position="334"/>
    </location>
</feature>
<feature type="active site" description="Proton acceptor" evidence="1">
    <location>
        <position position="151"/>
    </location>
</feature>
<feature type="binding site" evidence="1">
    <location>
        <position position="126"/>
    </location>
    <ligand>
        <name>substrate</name>
    </ligand>
</feature>
<name>YCL2_ECO11</name>